<sequence>MSTFETLIKRGGNEAIKINPPTGADFHITSRGSDWFWTCFCCYLLFGLILTFLMFRKPVNDRFFYLTGIAPNFFMCIAYFTMASNLGWIPVKAKYNHVQTSTQKEHPGYRQIFYSRFVGWFLALPWPIIQICMLAGTPFWQMAFNVCITEFFTVCWLIAACVHSTYKWGYYTIGLGAAIVVSISVMTTSYNLVKQRDNDIRLTFLVFFSIIMFLWIIAYPTCFGITDGGNVLQPDSAGIFYGIIDLILMCFIPTLLVPIANHFGADKLGYHFGPSDAEAVMAPKAPVASPRPAATPNLSKDKKKKSKKSKKSKKSKKSEE</sequence>
<keyword id="KW-1003">Cell membrane</keyword>
<keyword id="KW-0472">Membrane</keyword>
<keyword id="KW-0496">Mitochondrion</keyword>
<keyword id="KW-0597">Phosphoprotein</keyword>
<keyword id="KW-1185">Reference proteome</keyword>
<keyword id="KW-0812">Transmembrane</keyword>
<keyword id="KW-1133">Transmembrane helix</keyword>
<feature type="chain" id="PRO_0000196285" description="Protein MRH1">
    <location>
        <begin position="1"/>
        <end position="320"/>
    </location>
</feature>
<feature type="topological domain" description="Extracellular" evidence="1">
    <location>
        <begin position="1"/>
        <end position="34"/>
    </location>
</feature>
<feature type="transmembrane region" description="Helical" evidence="1">
    <location>
        <begin position="35"/>
        <end position="55"/>
    </location>
</feature>
<feature type="topological domain" description="Cytoplasmic" evidence="1">
    <location>
        <begin position="56"/>
        <end position="62"/>
    </location>
</feature>
<feature type="transmembrane region" description="Helical" evidence="1">
    <location>
        <begin position="63"/>
        <end position="83"/>
    </location>
</feature>
<feature type="topological domain" description="Extracellular" evidence="1">
    <location>
        <begin position="84"/>
        <end position="116"/>
    </location>
</feature>
<feature type="transmembrane region" description="Helical" evidence="1">
    <location>
        <begin position="117"/>
        <end position="137"/>
    </location>
</feature>
<feature type="topological domain" description="Cytoplasmic" evidence="1">
    <location>
        <begin position="138"/>
        <end position="141"/>
    </location>
</feature>
<feature type="transmembrane region" description="Helical" evidence="1">
    <location>
        <begin position="142"/>
        <end position="162"/>
    </location>
</feature>
<feature type="topological domain" description="Extracellular" evidence="1">
    <location>
        <begin position="163"/>
        <end position="167"/>
    </location>
</feature>
<feature type="transmembrane region" description="Helical" evidence="1">
    <location>
        <begin position="168"/>
        <end position="188"/>
    </location>
</feature>
<feature type="topological domain" description="Cytoplasmic" evidence="1">
    <location>
        <begin position="189"/>
        <end position="204"/>
    </location>
</feature>
<feature type="transmembrane region" description="Helical" evidence="1">
    <location>
        <begin position="205"/>
        <end position="225"/>
    </location>
</feature>
<feature type="topological domain" description="Extracellular" evidence="1">
    <location>
        <begin position="226"/>
        <end position="238"/>
    </location>
</feature>
<feature type="transmembrane region" description="Helical" evidence="1">
    <location>
        <begin position="239"/>
        <end position="259"/>
    </location>
</feature>
<feature type="topological domain" description="Cytoplasmic" evidence="1">
    <location>
        <begin position="260"/>
        <end position="320"/>
    </location>
</feature>
<feature type="region of interest" description="Disordered" evidence="2">
    <location>
        <begin position="285"/>
        <end position="320"/>
    </location>
</feature>
<feature type="compositionally biased region" description="Basic residues" evidence="2">
    <location>
        <begin position="301"/>
        <end position="320"/>
    </location>
</feature>
<feature type="modified residue" description="Phosphoserine" evidence="5 6 7 8 9 10">
    <location>
        <position position="289"/>
    </location>
</feature>
<feature type="modified residue" description="Phosphothreonine" evidence="6 7 8 9 10">
    <location>
        <position position="295"/>
    </location>
</feature>
<feature type="modified residue" description="Phosphoserine" evidence="6 10">
    <location>
        <position position="299"/>
    </location>
</feature>
<reference key="1">
    <citation type="journal article" date="1997" name="Nature">
        <title>The nucleotide sequence of Saccharomyces cerevisiae chromosome IV.</title>
        <authorList>
            <person name="Jacq C."/>
            <person name="Alt-Moerbe J."/>
            <person name="Andre B."/>
            <person name="Arnold W."/>
            <person name="Bahr A."/>
            <person name="Ballesta J.P.G."/>
            <person name="Bargues M."/>
            <person name="Baron L."/>
            <person name="Becker A."/>
            <person name="Biteau N."/>
            <person name="Bloecker H."/>
            <person name="Blugeon C."/>
            <person name="Boskovic J."/>
            <person name="Brandt P."/>
            <person name="Brueckner M."/>
            <person name="Buitrago M.J."/>
            <person name="Coster F."/>
            <person name="Delaveau T."/>
            <person name="del Rey F."/>
            <person name="Dujon B."/>
            <person name="Eide L.G."/>
            <person name="Garcia-Cantalejo J.M."/>
            <person name="Goffeau A."/>
            <person name="Gomez-Peris A."/>
            <person name="Granotier C."/>
            <person name="Hanemann V."/>
            <person name="Hankeln T."/>
            <person name="Hoheisel J.D."/>
            <person name="Jaeger W."/>
            <person name="Jimenez A."/>
            <person name="Jonniaux J.-L."/>
            <person name="Kraemer C."/>
            <person name="Kuester H."/>
            <person name="Laamanen P."/>
            <person name="Legros Y."/>
            <person name="Louis E.J."/>
            <person name="Moeller-Rieker S."/>
            <person name="Monnet A."/>
            <person name="Moro M."/>
            <person name="Mueller-Auer S."/>
            <person name="Nussbaumer B."/>
            <person name="Paricio N."/>
            <person name="Paulin L."/>
            <person name="Perea J."/>
            <person name="Perez-Alonso M."/>
            <person name="Perez-Ortin J.E."/>
            <person name="Pohl T.M."/>
            <person name="Prydz H."/>
            <person name="Purnelle B."/>
            <person name="Rasmussen S.W."/>
            <person name="Remacha M.A."/>
            <person name="Revuelta J.L."/>
            <person name="Rieger M."/>
            <person name="Salom D."/>
            <person name="Saluz H.P."/>
            <person name="Saiz J.E."/>
            <person name="Saren A.-M."/>
            <person name="Schaefer M."/>
            <person name="Scharfe M."/>
            <person name="Schmidt E.R."/>
            <person name="Schneider C."/>
            <person name="Scholler P."/>
            <person name="Schwarz S."/>
            <person name="Soler-Mira A."/>
            <person name="Urrestarazu L.A."/>
            <person name="Verhasselt P."/>
            <person name="Vissers S."/>
            <person name="Voet M."/>
            <person name="Volckaert G."/>
            <person name="Wagner G."/>
            <person name="Wambutt R."/>
            <person name="Wedler E."/>
            <person name="Wedler H."/>
            <person name="Woelfl S."/>
            <person name="Harris D.E."/>
            <person name="Bowman S."/>
            <person name="Brown D."/>
            <person name="Churcher C.M."/>
            <person name="Connor R."/>
            <person name="Dedman K."/>
            <person name="Gentles S."/>
            <person name="Hamlin N."/>
            <person name="Hunt S."/>
            <person name="Jones L."/>
            <person name="McDonald S."/>
            <person name="Murphy L.D."/>
            <person name="Niblett D."/>
            <person name="Odell C."/>
            <person name="Oliver K."/>
            <person name="Rajandream M.A."/>
            <person name="Richards C."/>
            <person name="Shore L."/>
            <person name="Walsh S.V."/>
            <person name="Barrell B.G."/>
            <person name="Dietrich F.S."/>
            <person name="Mulligan J.T."/>
            <person name="Allen E."/>
            <person name="Araujo R."/>
            <person name="Aviles E."/>
            <person name="Berno A."/>
            <person name="Carpenter J."/>
            <person name="Chen E."/>
            <person name="Cherry J.M."/>
            <person name="Chung E."/>
            <person name="Duncan M."/>
            <person name="Hunicke-Smith S."/>
            <person name="Hyman R.W."/>
            <person name="Komp C."/>
            <person name="Lashkari D."/>
            <person name="Lew H."/>
            <person name="Lin D."/>
            <person name="Mosedale D."/>
            <person name="Nakahara K."/>
            <person name="Namath A."/>
            <person name="Oefner P."/>
            <person name="Oh C."/>
            <person name="Petel F.X."/>
            <person name="Roberts D."/>
            <person name="Schramm S."/>
            <person name="Schroeder M."/>
            <person name="Shogren T."/>
            <person name="Shroff N."/>
            <person name="Winant A."/>
            <person name="Yelton M.A."/>
            <person name="Botstein D."/>
            <person name="Davis R.W."/>
            <person name="Johnston M."/>
            <person name="Andrews S."/>
            <person name="Brinkman R."/>
            <person name="Cooper J."/>
            <person name="Ding H."/>
            <person name="Du Z."/>
            <person name="Favello A."/>
            <person name="Fulton L."/>
            <person name="Gattung S."/>
            <person name="Greco T."/>
            <person name="Hallsworth K."/>
            <person name="Hawkins J."/>
            <person name="Hillier L.W."/>
            <person name="Jier M."/>
            <person name="Johnson D."/>
            <person name="Johnston L."/>
            <person name="Kirsten J."/>
            <person name="Kucaba T."/>
            <person name="Langston Y."/>
            <person name="Latreille P."/>
            <person name="Le T."/>
            <person name="Mardis E."/>
            <person name="Menezes S."/>
            <person name="Miller N."/>
            <person name="Nhan M."/>
            <person name="Pauley A."/>
            <person name="Peluso D."/>
            <person name="Rifkin L."/>
            <person name="Riles L."/>
            <person name="Taich A."/>
            <person name="Trevaskis E."/>
            <person name="Vignati D."/>
            <person name="Wilcox L."/>
            <person name="Wohldman P."/>
            <person name="Vaudin M."/>
            <person name="Wilson R."/>
            <person name="Waterston R."/>
            <person name="Albermann K."/>
            <person name="Hani J."/>
            <person name="Heumann K."/>
            <person name="Kleine K."/>
            <person name="Mewes H.-W."/>
            <person name="Zollner A."/>
            <person name="Zaccaria P."/>
        </authorList>
    </citation>
    <scope>NUCLEOTIDE SEQUENCE [LARGE SCALE GENOMIC DNA]</scope>
    <source>
        <strain>ATCC 204508 / S288c</strain>
    </source>
</reference>
<reference key="2">
    <citation type="journal article" date="2014" name="G3 (Bethesda)">
        <title>The reference genome sequence of Saccharomyces cerevisiae: Then and now.</title>
        <authorList>
            <person name="Engel S.R."/>
            <person name="Dietrich F.S."/>
            <person name="Fisk D.G."/>
            <person name="Binkley G."/>
            <person name="Balakrishnan R."/>
            <person name="Costanzo M.C."/>
            <person name="Dwight S.S."/>
            <person name="Hitz B.C."/>
            <person name="Karra K."/>
            <person name="Nash R.S."/>
            <person name="Weng S."/>
            <person name="Wong E.D."/>
            <person name="Lloyd P."/>
            <person name="Skrzypek M.S."/>
            <person name="Miyasato S.R."/>
            <person name="Simison M."/>
            <person name="Cherry J.M."/>
        </authorList>
    </citation>
    <scope>GENOME REANNOTATION</scope>
    <source>
        <strain>ATCC 204508 / S288c</strain>
    </source>
</reference>
<reference key="3">
    <citation type="journal article" date="2000" name="Biochim. Biophys. Acta">
        <title>Expression and subcellular localization of a membrane protein related to Hsp30p in Saccharomyces cerevisiae.</title>
        <authorList>
            <person name="Wu K."/>
            <person name="Dawe J.H."/>
            <person name="Aris J.P."/>
        </authorList>
    </citation>
    <scope>SUBCELLULAR LOCATION</scope>
</reference>
<reference key="4">
    <citation type="journal article" date="2002" name="Proteomics">
        <title>Subproteomics: identification of plasma membrane proteins from the yeast Saccharomyces cerevisiae.</title>
        <authorList>
            <person name="Navarre C."/>
            <person name="Degand H."/>
            <person name="Bennett K.L."/>
            <person name="Crawford J.S."/>
            <person name="Moertz E."/>
            <person name="Boutry M."/>
        </authorList>
    </citation>
    <scope>SUBCELLULAR LOCATION</scope>
</reference>
<reference key="5">
    <citation type="journal article" date="2003" name="Nature">
        <title>Global analysis of protein localization in budding yeast.</title>
        <authorList>
            <person name="Huh W.-K."/>
            <person name="Falvo J.V."/>
            <person name="Gerke L.C."/>
            <person name="Carroll A.S."/>
            <person name="Howson R.W."/>
            <person name="Weissman J.S."/>
            <person name="O'Shea E.K."/>
        </authorList>
    </citation>
    <scope>SUBCELLULAR LOCATION [LARGE SCALE ANALYSIS]</scope>
</reference>
<reference key="6">
    <citation type="journal article" date="2003" name="Nature">
        <title>Global analysis of protein expression in yeast.</title>
        <authorList>
            <person name="Ghaemmaghami S."/>
            <person name="Huh W.-K."/>
            <person name="Bower K."/>
            <person name="Howson R.W."/>
            <person name="Belle A."/>
            <person name="Dephoure N."/>
            <person name="O'Shea E.K."/>
            <person name="Weissman J.S."/>
        </authorList>
    </citation>
    <scope>LEVEL OF PROTEIN EXPRESSION [LARGE SCALE ANALYSIS]</scope>
</reference>
<reference key="7">
    <citation type="journal article" date="2003" name="Proc. Natl. Acad. Sci. U.S.A.">
        <title>The proteome of Saccharomyces cerevisiae mitochondria.</title>
        <authorList>
            <person name="Sickmann A."/>
            <person name="Reinders J."/>
            <person name="Wagner Y."/>
            <person name="Joppich C."/>
            <person name="Zahedi R.P."/>
            <person name="Meyer H.E."/>
            <person name="Schoenfisch B."/>
            <person name="Perschil I."/>
            <person name="Chacinska A."/>
            <person name="Guiard B."/>
            <person name="Rehling P."/>
            <person name="Pfanner N."/>
            <person name="Meisinger C."/>
        </authorList>
    </citation>
    <scope>SUBCELLULAR LOCATION [LARGE SCALE ANALYSIS]</scope>
    <source>
        <strain>ATCC 76625 / YPH499</strain>
    </source>
</reference>
<reference key="8">
    <citation type="journal article" date="2005" name="Mol. Cell. Proteomics">
        <title>Quantitative phosphoproteomics applied to the yeast pheromone signaling pathway.</title>
        <authorList>
            <person name="Gruhler A."/>
            <person name="Olsen J.V."/>
            <person name="Mohammed S."/>
            <person name="Mortensen P."/>
            <person name="Faergeman N.J."/>
            <person name="Mann M."/>
            <person name="Jensen O.N."/>
        </authorList>
    </citation>
    <scope>PHOSPHORYLATION [LARGE SCALE ANALYSIS] AT SER-289</scope>
    <scope>IDENTIFICATION BY MASS SPECTROMETRY [LARGE SCALE ANALYSIS]</scope>
    <source>
        <strain>YAL6B</strain>
    </source>
</reference>
<reference key="9">
    <citation type="journal article" date="2006" name="Proc. Natl. Acad. Sci. U.S.A.">
        <title>A global topology map of the Saccharomyces cerevisiae membrane proteome.</title>
        <authorList>
            <person name="Kim H."/>
            <person name="Melen K."/>
            <person name="Oesterberg M."/>
            <person name="von Heijne G."/>
        </authorList>
    </citation>
    <scope>TOPOLOGY [LARGE SCALE ANALYSIS]</scope>
    <source>
        <strain>ATCC 208353 / W303-1A</strain>
    </source>
</reference>
<reference key="10">
    <citation type="journal article" date="2007" name="J. Proteome Res.">
        <title>Large-scale phosphorylation analysis of alpha-factor-arrested Saccharomyces cerevisiae.</title>
        <authorList>
            <person name="Li X."/>
            <person name="Gerber S.A."/>
            <person name="Rudner A.D."/>
            <person name="Beausoleil S.A."/>
            <person name="Haas W."/>
            <person name="Villen J."/>
            <person name="Elias J.E."/>
            <person name="Gygi S.P."/>
        </authorList>
    </citation>
    <scope>PHOSPHORYLATION [LARGE SCALE ANALYSIS] AT SER-289 AND THR-295</scope>
    <scope>IDENTIFICATION BY MASS SPECTROMETRY [LARGE SCALE ANALYSIS]</scope>
    <source>
        <strain>ADR376</strain>
    </source>
</reference>
<reference key="11">
    <citation type="journal article" date="2007" name="Mol. Cell. Proteomics">
        <title>Profiling phosphoproteins of yeast mitochondria reveals a role of phosphorylation in assembly of the ATP synthase.</title>
        <authorList>
            <person name="Reinders J."/>
            <person name="Wagner K."/>
            <person name="Zahedi R.P."/>
            <person name="Stojanovski D."/>
            <person name="Eyrich B."/>
            <person name="van der Laan M."/>
            <person name="Rehling P."/>
            <person name="Sickmann A."/>
            <person name="Pfanner N."/>
            <person name="Meisinger C."/>
        </authorList>
    </citation>
    <scope>PHOSPHORYLATION [LARGE SCALE ANALYSIS] AT SER-289 AND THR-295</scope>
    <scope>IDENTIFICATION BY MASS SPECTROMETRY [LARGE SCALE ANALYSIS]</scope>
    <source>
        <strain>ATCC 76625 / YPH499</strain>
    </source>
</reference>
<reference key="12">
    <citation type="journal article" date="2007" name="Proc. Natl. Acad. Sci. U.S.A.">
        <title>Analysis of phosphorylation sites on proteins from Saccharomyces cerevisiae by electron transfer dissociation (ETD) mass spectrometry.</title>
        <authorList>
            <person name="Chi A."/>
            <person name="Huttenhower C."/>
            <person name="Geer L.Y."/>
            <person name="Coon J.J."/>
            <person name="Syka J.E.P."/>
            <person name="Bai D.L."/>
            <person name="Shabanowitz J."/>
            <person name="Burke D.J."/>
            <person name="Troyanskaya O.G."/>
            <person name="Hunt D.F."/>
        </authorList>
    </citation>
    <scope>PHOSPHORYLATION [LARGE SCALE ANALYSIS] AT SER-289; THR-295 AND SER-299</scope>
    <scope>IDENTIFICATION BY MASS SPECTROMETRY [LARGE SCALE ANALYSIS]</scope>
</reference>
<reference key="13">
    <citation type="journal article" date="2008" name="Mol. Cell. Proteomics">
        <title>A multidimensional chromatography technology for in-depth phosphoproteome analysis.</title>
        <authorList>
            <person name="Albuquerque C.P."/>
            <person name="Smolka M.B."/>
            <person name="Payne S.H."/>
            <person name="Bafna V."/>
            <person name="Eng J."/>
            <person name="Zhou H."/>
        </authorList>
    </citation>
    <scope>PHOSPHORYLATION [LARGE SCALE ANALYSIS] AT SER-289 AND THR-295</scope>
    <scope>IDENTIFICATION BY MASS SPECTROMETRY [LARGE SCALE ANALYSIS]</scope>
</reference>
<reference key="14">
    <citation type="journal article" date="2009" name="Science">
        <title>Global analysis of Cdk1 substrate phosphorylation sites provides insights into evolution.</title>
        <authorList>
            <person name="Holt L.J."/>
            <person name="Tuch B.B."/>
            <person name="Villen J."/>
            <person name="Johnson A.D."/>
            <person name="Gygi S.P."/>
            <person name="Morgan D.O."/>
        </authorList>
    </citation>
    <scope>PHOSPHORYLATION [LARGE SCALE ANALYSIS] AT SER-289; THR-295 AND SER-299</scope>
    <scope>IDENTIFICATION BY MASS SPECTROMETRY [LARGE SCALE ANALYSIS]</scope>
</reference>
<accession>Q12117</accession>
<accession>D6VS17</accession>
<proteinExistence type="evidence at protein level"/>
<comment type="subcellular location">
    <subcellularLocation>
        <location>Cell membrane</location>
        <topology>Multi-pass membrane protein</topology>
    </subcellularLocation>
    <subcellularLocation>
        <location>Mitochondrion</location>
    </subcellularLocation>
    <subcellularLocation>
        <location>Bud</location>
    </subcellularLocation>
    <text>Localized primarily to the plasma membrane. Also found at the buds.</text>
</comment>
<comment type="miscellaneous">
    <text evidence="3">Present with 182000 molecules/cell in log phase SD medium.</text>
</comment>
<comment type="similarity">
    <text evidence="4">Belongs to the archaeal/bacterial/fungal opsin family.</text>
</comment>
<gene>
    <name type="primary">MRH1</name>
    <name type="ordered locus">YDR033W</name>
    <name type="ORF">YD9673.03</name>
</gene>
<evidence type="ECO:0000255" key="1"/>
<evidence type="ECO:0000256" key="2">
    <source>
        <dbReference type="SAM" id="MobiDB-lite"/>
    </source>
</evidence>
<evidence type="ECO:0000269" key="3">
    <source>
    </source>
</evidence>
<evidence type="ECO:0000305" key="4"/>
<evidence type="ECO:0007744" key="5">
    <source>
    </source>
</evidence>
<evidence type="ECO:0007744" key="6">
    <source>
    </source>
</evidence>
<evidence type="ECO:0007744" key="7">
    <source>
    </source>
</evidence>
<evidence type="ECO:0007744" key="8">
    <source>
    </source>
</evidence>
<evidence type="ECO:0007744" key="9">
    <source>
    </source>
</evidence>
<evidence type="ECO:0007744" key="10">
    <source>
    </source>
</evidence>
<name>MRH1_YEAST</name>
<organism>
    <name type="scientific">Saccharomyces cerevisiae (strain ATCC 204508 / S288c)</name>
    <name type="common">Baker's yeast</name>
    <dbReference type="NCBI Taxonomy" id="559292"/>
    <lineage>
        <taxon>Eukaryota</taxon>
        <taxon>Fungi</taxon>
        <taxon>Dikarya</taxon>
        <taxon>Ascomycota</taxon>
        <taxon>Saccharomycotina</taxon>
        <taxon>Saccharomycetes</taxon>
        <taxon>Saccharomycetales</taxon>
        <taxon>Saccharomycetaceae</taxon>
        <taxon>Saccharomyces</taxon>
    </lineage>
</organism>
<protein>
    <recommendedName>
        <fullName>Protein MRH1</fullName>
    </recommendedName>
    <alternativeName>
        <fullName>Membrane protein related to HSP30</fullName>
    </alternativeName>
</protein>
<dbReference type="EMBL" id="Z74329">
    <property type="protein sequence ID" value="CAA98855.1"/>
    <property type="molecule type" value="Genomic_DNA"/>
</dbReference>
<dbReference type="EMBL" id="Z68196">
    <property type="protein sequence ID" value="CAA92370.1"/>
    <property type="molecule type" value="Genomic_DNA"/>
</dbReference>
<dbReference type="EMBL" id="BK006938">
    <property type="protein sequence ID" value="DAA11877.1"/>
    <property type="molecule type" value="Genomic_DNA"/>
</dbReference>
<dbReference type="PIR" id="S61586">
    <property type="entry name" value="S61586"/>
</dbReference>
<dbReference type="RefSeq" id="NP_010316.1">
    <property type="nucleotide sequence ID" value="NM_001180341.1"/>
</dbReference>
<dbReference type="SMR" id="Q12117"/>
<dbReference type="BioGRID" id="32082">
    <property type="interactions" value="143"/>
</dbReference>
<dbReference type="FunCoup" id="Q12117">
    <property type="interactions" value="95"/>
</dbReference>
<dbReference type="IntAct" id="Q12117">
    <property type="interactions" value="11"/>
</dbReference>
<dbReference type="MINT" id="Q12117"/>
<dbReference type="STRING" id="4932.YDR033W"/>
<dbReference type="TCDB" id="3.E.1.4.6">
    <property type="family name" value="the ion-translocating microbial rhodopsin (mr) family"/>
</dbReference>
<dbReference type="iPTMnet" id="Q12117"/>
<dbReference type="PaxDb" id="4932-YDR033W"/>
<dbReference type="PeptideAtlas" id="Q12117"/>
<dbReference type="EnsemblFungi" id="YDR033W_mRNA">
    <property type="protein sequence ID" value="YDR033W"/>
    <property type="gene ID" value="YDR033W"/>
</dbReference>
<dbReference type="GeneID" id="851597"/>
<dbReference type="KEGG" id="sce:YDR033W"/>
<dbReference type="AGR" id="SGD:S000002440"/>
<dbReference type="SGD" id="S000002440">
    <property type="gene designation" value="MRH1"/>
</dbReference>
<dbReference type="VEuPathDB" id="FungiDB:YDR033W"/>
<dbReference type="eggNOG" id="ENOG502QQVQ">
    <property type="taxonomic scope" value="Eukaryota"/>
</dbReference>
<dbReference type="GeneTree" id="ENSGT00940000176735"/>
<dbReference type="HOGENOM" id="CLU_054785_1_0_1"/>
<dbReference type="InParanoid" id="Q12117"/>
<dbReference type="OMA" id="VVHSTYK"/>
<dbReference type="OrthoDB" id="536545at2759"/>
<dbReference type="BioCyc" id="YEAST:G3O-29648-MONOMER"/>
<dbReference type="BioGRID-ORCS" id="851597">
    <property type="hits" value="2 hits in 10 CRISPR screens"/>
</dbReference>
<dbReference type="PRO" id="PR:Q12117"/>
<dbReference type="Proteomes" id="UP000002311">
    <property type="component" value="Chromosome IV"/>
</dbReference>
<dbReference type="RNAct" id="Q12117">
    <property type="molecule type" value="protein"/>
</dbReference>
<dbReference type="GO" id="GO:0005933">
    <property type="term" value="C:cellular bud"/>
    <property type="evidence" value="ECO:0007669"/>
    <property type="project" value="UniProtKB-SubCell"/>
</dbReference>
<dbReference type="GO" id="GO:0005783">
    <property type="term" value="C:endoplasmic reticulum"/>
    <property type="evidence" value="ECO:0007005"/>
    <property type="project" value="SGD"/>
</dbReference>
<dbReference type="GO" id="GO:0005739">
    <property type="term" value="C:mitochondrion"/>
    <property type="evidence" value="ECO:0007005"/>
    <property type="project" value="SGD"/>
</dbReference>
<dbReference type="GO" id="GO:0005886">
    <property type="term" value="C:plasma membrane"/>
    <property type="evidence" value="ECO:0000314"/>
    <property type="project" value="SGD"/>
</dbReference>
<dbReference type="CDD" id="cd15239">
    <property type="entry name" value="7tm_YRO2_fungal-like"/>
    <property type="match status" value="1"/>
</dbReference>
<dbReference type="FunFam" id="1.20.1070.10:FF:000160">
    <property type="entry name" value="Related to Opsin-1"/>
    <property type="match status" value="1"/>
</dbReference>
<dbReference type="Gene3D" id="1.20.1070.10">
    <property type="entry name" value="Rhodopsin 7-helix transmembrane proteins"/>
    <property type="match status" value="1"/>
</dbReference>
<dbReference type="InterPro" id="IPR001425">
    <property type="entry name" value="Arc/bac/fun_rhodopsins"/>
</dbReference>
<dbReference type="InterPro" id="IPR043476">
    <property type="entry name" value="Yro2-like_7TM"/>
</dbReference>
<dbReference type="PANTHER" id="PTHR28286">
    <property type="match status" value="1"/>
</dbReference>
<dbReference type="PANTHER" id="PTHR28286:SF1">
    <property type="entry name" value="30 KDA HEAT SHOCK PROTEIN-RELATED"/>
    <property type="match status" value="1"/>
</dbReference>
<dbReference type="Pfam" id="PF01036">
    <property type="entry name" value="Bac_rhodopsin"/>
    <property type="match status" value="1"/>
</dbReference>
<dbReference type="SMART" id="SM01021">
    <property type="entry name" value="Bac_rhodopsin"/>
    <property type="match status" value="1"/>
</dbReference>
<dbReference type="SUPFAM" id="SSF81321">
    <property type="entry name" value="Family A G protein-coupled receptor-like"/>
    <property type="match status" value="1"/>
</dbReference>